<sequence length="18" mass="1903">NSGMINSILGIPRVMTEA</sequence>
<organism>
    <name type="scientific">Pandalus borealis</name>
    <name type="common">Northern red shrimp</name>
    <dbReference type="NCBI Taxonomy" id="6703"/>
    <lineage>
        <taxon>Eukaryota</taxon>
        <taxon>Metazoa</taxon>
        <taxon>Ecdysozoa</taxon>
        <taxon>Arthropoda</taxon>
        <taxon>Crustacea</taxon>
        <taxon>Multicrustacea</taxon>
        <taxon>Malacostraca</taxon>
        <taxon>Eumalacostraca</taxon>
        <taxon>Eucarida</taxon>
        <taxon>Decapoda</taxon>
        <taxon>Pleocyemata</taxon>
        <taxon>Caridea</taxon>
        <taxon>Pandaloidea</taxon>
        <taxon>Pandalidae</taxon>
        <taxon>Pandalus</taxon>
    </lineage>
</organism>
<feature type="peptide" id="PRO_0000044234" description="Pigment-dispersing hormone">
    <location>
        <begin position="1"/>
        <end position="18"/>
    </location>
</feature>
<feature type="modified residue" description="Alanine amide" evidence="1">
    <location>
        <position position="18"/>
    </location>
</feature>
<reference key="1">
    <citation type="journal article" date="1976" name="Biochim. Biophys. Acta">
        <title>Structure of a light-adapting hormone from the shrimp, Pandalus borealis.</title>
        <authorList>
            <person name="Fernlund P."/>
        </authorList>
    </citation>
    <scope>PROTEIN SEQUENCE</scope>
    <scope>AMIDATION AT ALA-18</scope>
</reference>
<accession>P01209</accession>
<evidence type="ECO:0000269" key="1">
    <source>
    </source>
</evidence>
<evidence type="ECO:0000305" key="2"/>
<comment type="function">
    <text>Causes the migration of the distal retinal pigment into the proximal end of the pigment chromatophore cells and thus decreases the amount of light entering the retinulas. May also function as a neurotransmitter and/or neuromodulator.</text>
</comment>
<comment type="subcellular location">
    <subcellularLocation>
        <location>Secreted</location>
    </subcellularLocation>
</comment>
<comment type="similarity">
    <text evidence="2">Belongs to the arthropod PDH family.</text>
</comment>
<dbReference type="PIR" id="A01473">
    <property type="entry name" value="DRDPPP"/>
</dbReference>
<dbReference type="GO" id="GO:0005576">
    <property type="term" value="C:extracellular region"/>
    <property type="evidence" value="ECO:0007669"/>
    <property type="project" value="UniProtKB-SubCell"/>
</dbReference>
<dbReference type="GO" id="GO:0045202">
    <property type="term" value="C:synapse"/>
    <property type="evidence" value="ECO:0007669"/>
    <property type="project" value="GOC"/>
</dbReference>
<dbReference type="GO" id="GO:0005179">
    <property type="term" value="F:hormone activity"/>
    <property type="evidence" value="ECO:0007669"/>
    <property type="project" value="UniProtKB-KW"/>
</dbReference>
<dbReference type="GO" id="GO:0007268">
    <property type="term" value="P:chemical synaptic transmission"/>
    <property type="evidence" value="ECO:0007669"/>
    <property type="project" value="UniProtKB-KW"/>
</dbReference>
<dbReference type="GO" id="GO:0009416">
    <property type="term" value="P:response to light stimulus"/>
    <property type="evidence" value="ECO:0007669"/>
    <property type="project" value="InterPro"/>
</dbReference>
<dbReference type="InterPro" id="IPR009396">
    <property type="entry name" value="Pigment_DH"/>
</dbReference>
<dbReference type="Pfam" id="PF06324">
    <property type="entry name" value="Pigment_DH"/>
    <property type="match status" value="1"/>
</dbReference>
<protein>
    <recommendedName>
        <fullName>Pigment-dispersing hormone</fullName>
        <shortName>PDH</shortName>
    </recommendedName>
    <alternativeName>
        <fullName>Light-adapting distal retinal pigment hormone</fullName>
        <shortName>DRPH</shortName>
    </alternativeName>
</protein>
<name>PDH_PANBO</name>
<keyword id="KW-0027">Amidation</keyword>
<keyword id="KW-0903">Direct protein sequencing</keyword>
<keyword id="KW-0372">Hormone</keyword>
<keyword id="KW-0529">Neurotransmitter</keyword>
<keyword id="KW-0964">Secreted</keyword>
<proteinExistence type="evidence at protein level"/>